<comment type="subcellular location">
    <subcellularLocation>
        <location evidence="2">Membrane</location>
        <topology evidence="2">Single-pass membrane protein</topology>
    </subcellularLocation>
</comment>
<dbReference type="EMBL" id="AE000520">
    <property type="protein sequence ID" value="AAC65242.1"/>
    <property type="molecule type" value="Genomic_DNA"/>
</dbReference>
<dbReference type="PIR" id="E71348">
    <property type="entry name" value="E71348"/>
</dbReference>
<dbReference type="STRING" id="243276.TP_0250"/>
<dbReference type="EnsemblBacteria" id="AAC65242">
    <property type="protein sequence ID" value="AAC65242"/>
    <property type="gene ID" value="TP_0250"/>
</dbReference>
<dbReference type="KEGG" id="tpa:TP_0250"/>
<dbReference type="KEGG" id="tpw:TPANIC_0250a"/>
<dbReference type="HOGENOM" id="CLU_2670012_0_0_12"/>
<dbReference type="Proteomes" id="UP000000811">
    <property type="component" value="Chromosome"/>
</dbReference>
<dbReference type="GO" id="GO:0016020">
    <property type="term" value="C:membrane"/>
    <property type="evidence" value="ECO:0007669"/>
    <property type="project" value="UniProtKB-SubCell"/>
</dbReference>
<keyword id="KW-0472">Membrane</keyword>
<keyword id="KW-1185">Reference proteome</keyword>
<keyword id="KW-0812">Transmembrane</keyword>
<keyword id="KW-1133">Transmembrane helix</keyword>
<protein>
    <recommendedName>
        <fullName>Uncharacterized protein TP_0250</fullName>
    </recommendedName>
</protein>
<accession>O83277</accession>
<feature type="chain" id="PRO_0000202219" description="Uncharacterized protein TP_0250">
    <location>
        <begin position="1"/>
        <end position="75"/>
    </location>
</feature>
<feature type="transmembrane region" description="Helical" evidence="1">
    <location>
        <begin position="4"/>
        <end position="26"/>
    </location>
</feature>
<evidence type="ECO:0000255" key="1"/>
<evidence type="ECO:0000305" key="2"/>
<proteinExistence type="predicted"/>
<reference key="1">
    <citation type="journal article" date="1998" name="Science">
        <title>Complete genome sequence of Treponema pallidum, the syphilis spirochete.</title>
        <authorList>
            <person name="Fraser C.M."/>
            <person name="Norris S.J."/>
            <person name="Weinstock G.M."/>
            <person name="White O."/>
            <person name="Sutton G.G."/>
            <person name="Dodson R.J."/>
            <person name="Gwinn M.L."/>
            <person name="Hickey E.K."/>
            <person name="Clayton R.A."/>
            <person name="Ketchum K.A."/>
            <person name="Sodergren E."/>
            <person name="Hardham J.M."/>
            <person name="McLeod M.P."/>
            <person name="Salzberg S.L."/>
            <person name="Peterson J.D."/>
            <person name="Khalak H.G."/>
            <person name="Richardson D.L."/>
            <person name="Howell J.K."/>
            <person name="Chidambaram M."/>
            <person name="Utterback T.R."/>
            <person name="McDonald L.A."/>
            <person name="Artiach P."/>
            <person name="Bowman C."/>
            <person name="Cotton M.D."/>
            <person name="Fujii C."/>
            <person name="Garland S.A."/>
            <person name="Hatch B."/>
            <person name="Horst K."/>
            <person name="Roberts K.M."/>
            <person name="Sandusky M."/>
            <person name="Weidman J.F."/>
            <person name="Smith H.O."/>
            <person name="Venter J.C."/>
        </authorList>
    </citation>
    <scope>NUCLEOTIDE SEQUENCE [LARGE SCALE GENOMIC DNA]</scope>
    <source>
        <strain>Nichols</strain>
    </source>
</reference>
<gene>
    <name type="ordered locus">TP_0250</name>
</gene>
<name>Y250_TREPA</name>
<sequence>MSFPSLLFLGFSGVLAFGEVGWVGVYPPGRGMIRVRCVGCVVGWLGLRRVLVRGGIWLLLHPGIGRVLCLYLGAW</sequence>
<organism>
    <name type="scientific">Treponema pallidum (strain Nichols)</name>
    <dbReference type="NCBI Taxonomy" id="243276"/>
    <lineage>
        <taxon>Bacteria</taxon>
        <taxon>Pseudomonadati</taxon>
        <taxon>Spirochaetota</taxon>
        <taxon>Spirochaetia</taxon>
        <taxon>Spirochaetales</taxon>
        <taxon>Treponemataceae</taxon>
        <taxon>Treponema</taxon>
    </lineage>
</organism>